<evidence type="ECO:0000269" key="1">
    <source>
    </source>
</evidence>
<evidence type="ECO:0000269" key="2">
    <source>
    </source>
</evidence>
<evidence type="ECO:0000269" key="3">
    <source>
    </source>
</evidence>
<evidence type="ECO:0000269" key="4">
    <source>
    </source>
</evidence>
<evidence type="ECO:0000303" key="5">
    <source>
    </source>
</evidence>
<evidence type="ECO:0000305" key="6"/>
<evidence type="ECO:0007744" key="7">
    <source>
    </source>
</evidence>
<evidence type="ECO:0007744" key="8">
    <source>
    </source>
</evidence>
<evidence type="ECO:0007829" key="9">
    <source>
        <dbReference type="PDB" id="5D9G"/>
    </source>
</evidence>
<feature type="chain" id="PRO_0000301853" description="TIP41-like protein">
    <location>
        <begin position="1"/>
        <end position="272"/>
    </location>
</feature>
<feature type="region of interest" description="Interaction with PPP2CA">
    <location>
        <begin position="173"/>
        <end position="272"/>
    </location>
</feature>
<feature type="modified residue" description="N6-acetyllysine" evidence="7">
    <location>
        <position position="106"/>
    </location>
</feature>
<feature type="modified residue" description="Phosphoserine" evidence="8">
    <location>
        <position position="265"/>
    </location>
</feature>
<feature type="splice variant" id="VSP_027883" description="In isoform 2." evidence="5">
    <original>RVMPSS</original>
    <variation>PGGGHL</variation>
    <location>
        <begin position="173"/>
        <end position="178"/>
    </location>
</feature>
<feature type="splice variant" id="VSP_027884" description="In isoform 2." evidence="5">
    <location>
        <begin position="179"/>
        <end position="272"/>
    </location>
</feature>
<feature type="mutagenesis site" description="Abolishes interaction with PPP2CA, PPP2CB and PPP4C." evidence="3">
    <original>D</original>
    <variation>L</variation>
    <location>
        <position position="71"/>
    </location>
</feature>
<feature type="mutagenesis site" description="Diminishes interaction with PPP2CA." evidence="3">
    <original>Y</original>
    <variation>H</variation>
    <location>
        <position position="79"/>
    </location>
</feature>
<feature type="mutagenesis site" description="Abolishes interaction with PPP2CA, PPP2CB and PPP4C." evidence="3">
    <original>I</original>
    <variation>T</variation>
    <location>
        <position position="136"/>
    </location>
</feature>
<feature type="mutagenesis site" description="Abolishes interaction with PPP2CA, PPP2CB and PPP4C." evidence="3">
    <original>M</original>
    <variation>V</variation>
    <location>
        <position position="196"/>
    </location>
</feature>
<feature type="mutagenesis site" description="Abolishes interaction with PPP2CA, PPP2CB and PPP4C." evidence="3">
    <original>D</original>
    <variation>N</variation>
    <location>
        <position position="198"/>
    </location>
</feature>
<feature type="strand" evidence="9">
    <location>
        <begin position="18"/>
        <end position="23"/>
    </location>
</feature>
<feature type="helix" evidence="9">
    <location>
        <begin position="30"/>
        <end position="39"/>
    </location>
</feature>
<feature type="strand" evidence="9">
    <location>
        <begin position="47"/>
        <end position="49"/>
    </location>
</feature>
<feature type="strand" evidence="9">
    <location>
        <begin position="54"/>
        <end position="59"/>
    </location>
</feature>
<feature type="strand" evidence="9">
    <location>
        <begin position="64"/>
        <end position="67"/>
    </location>
</feature>
<feature type="helix" evidence="9">
    <location>
        <begin position="69"/>
        <end position="73"/>
    </location>
</feature>
<feature type="helix" evidence="9">
    <location>
        <begin position="83"/>
        <end position="86"/>
    </location>
</feature>
<feature type="strand" evidence="9">
    <location>
        <begin position="119"/>
        <end position="121"/>
    </location>
</feature>
<feature type="strand" evidence="9">
    <location>
        <begin position="128"/>
        <end position="131"/>
    </location>
</feature>
<feature type="helix" evidence="9">
    <location>
        <begin position="138"/>
        <end position="142"/>
    </location>
</feature>
<feature type="strand" evidence="9">
    <location>
        <begin position="148"/>
        <end position="158"/>
    </location>
</feature>
<feature type="turn" evidence="9">
    <location>
        <begin position="160"/>
        <end position="163"/>
    </location>
</feature>
<feature type="strand" evidence="9">
    <location>
        <begin position="164"/>
        <end position="175"/>
    </location>
</feature>
<feature type="strand" evidence="9">
    <location>
        <begin position="178"/>
        <end position="189"/>
    </location>
</feature>
<feature type="turn" evidence="9">
    <location>
        <begin position="190"/>
        <end position="192"/>
    </location>
</feature>
<feature type="strand" evidence="9">
    <location>
        <begin position="193"/>
        <end position="206"/>
    </location>
</feature>
<feature type="strand" evidence="9">
    <location>
        <begin position="208"/>
        <end position="220"/>
    </location>
</feature>
<feature type="helix" evidence="9">
    <location>
        <begin position="221"/>
        <end position="224"/>
    </location>
</feature>
<feature type="helix" evidence="9">
    <location>
        <begin position="229"/>
        <end position="233"/>
    </location>
</feature>
<feature type="helix" evidence="9">
    <location>
        <begin position="235"/>
        <end position="238"/>
    </location>
</feature>
<feature type="helix" evidence="9">
    <location>
        <begin position="239"/>
        <end position="241"/>
    </location>
</feature>
<feature type="strand" evidence="9">
    <location>
        <begin position="244"/>
        <end position="253"/>
    </location>
</feature>
<protein>
    <recommendedName>
        <fullName>TIP41-like protein</fullName>
    </recommendedName>
    <alternativeName>
        <fullName>Putative MAPK-activating protein PM10</fullName>
    </alternativeName>
    <alternativeName>
        <fullName>Type 2A-interacting protein</fullName>
        <shortName>TIP</shortName>
    </alternativeName>
</protein>
<accession>O75663</accession>
<accession>B2R8V3</accession>
<accession>Q5HYB2</accession>
<accession>Q8IZ86</accession>
<dbReference type="EMBL" id="AL049670">
    <property type="protein sequence ID" value="CAB41244.1"/>
    <property type="molecule type" value="mRNA"/>
</dbReference>
<dbReference type="EMBL" id="AB097034">
    <property type="protein sequence ID" value="BAC77387.1"/>
    <property type="molecule type" value="mRNA"/>
</dbReference>
<dbReference type="EMBL" id="AK313520">
    <property type="protein sequence ID" value="BAG36300.1"/>
    <property type="molecule type" value="mRNA"/>
</dbReference>
<dbReference type="EMBL" id="AL021397">
    <property type="status" value="NOT_ANNOTATED_CDS"/>
    <property type="molecule type" value="Genomic_DNA"/>
</dbReference>
<dbReference type="EMBL" id="CH471067">
    <property type="protein sequence ID" value="EAW90821.1"/>
    <property type="molecule type" value="Genomic_DNA"/>
</dbReference>
<dbReference type="EMBL" id="BC009506">
    <property type="protein sequence ID" value="AAH09506.1"/>
    <property type="molecule type" value="mRNA"/>
</dbReference>
<dbReference type="EMBL" id="BX648646">
    <property type="protein sequence ID" value="CAI46265.1"/>
    <property type="molecule type" value="Transcribed_RNA"/>
</dbReference>
<dbReference type="CCDS" id="CCDS1270.1">
    <molecule id="O75663-1"/>
</dbReference>
<dbReference type="CCDS" id="CCDS30935.1">
    <molecule id="O75663-2"/>
</dbReference>
<dbReference type="RefSeq" id="NP_001026970.1">
    <molecule id="O75663-2"/>
    <property type="nucleotide sequence ID" value="NM_001031800.3"/>
</dbReference>
<dbReference type="RefSeq" id="NP_690866.1">
    <molecule id="O75663-1"/>
    <property type="nucleotide sequence ID" value="NM_152902.5"/>
</dbReference>
<dbReference type="PDB" id="5D9G">
    <property type="method" value="X-ray"/>
    <property type="resolution" value="2.15 A"/>
    <property type="chains" value="A/B=16-256"/>
</dbReference>
<dbReference type="PDBsum" id="5D9G"/>
<dbReference type="SMR" id="O75663"/>
<dbReference type="BioGRID" id="129283">
    <property type="interactions" value="131"/>
</dbReference>
<dbReference type="FunCoup" id="O75663">
    <property type="interactions" value="2076"/>
</dbReference>
<dbReference type="IntAct" id="O75663">
    <property type="interactions" value="25"/>
</dbReference>
<dbReference type="MINT" id="O75663"/>
<dbReference type="STRING" id="9606.ENSP00000356807"/>
<dbReference type="GlyGen" id="O75663">
    <property type="glycosylation" value="2 sites, 1 O-linked glycan (2 sites)"/>
</dbReference>
<dbReference type="iPTMnet" id="O75663"/>
<dbReference type="PhosphoSitePlus" id="O75663"/>
<dbReference type="BioMuta" id="TIPRL"/>
<dbReference type="jPOST" id="O75663"/>
<dbReference type="MassIVE" id="O75663"/>
<dbReference type="PaxDb" id="9606-ENSP00000356807"/>
<dbReference type="PeptideAtlas" id="O75663"/>
<dbReference type="ProteomicsDB" id="50143">
    <molecule id="O75663-1"/>
</dbReference>
<dbReference type="ProteomicsDB" id="50144">
    <molecule id="O75663-2"/>
</dbReference>
<dbReference type="Pumba" id="O75663"/>
<dbReference type="Antibodypedia" id="34349">
    <property type="antibodies" value="242 antibodies from 31 providers"/>
</dbReference>
<dbReference type="CPTC" id="O75663">
    <property type="antibodies" value="1 antibody"/>
</dbReference>
<dbReference type="DNASU" id="261726"/>
<dbReference type="Ensembl" id="ENST00000367830.3">
    <molecule id="O75663-2"/>
    <property type="protein sequence ID" value="ENSP00000356804.3"/>
    <property type="gene ID" value="ENSG00000143155.13"/>
</dbReference>
<dbReference type="Ensembl" id="ENST00000367833.7">
    <molecule id="O75663-1"/>
    <property type="protein sequence ID" value="ENSP00000356807.2"/>
    <property type="gene ID" value="ENSG00000143155.13"/>
</dbReference>
<dbReference type="GeneID" id="261726"/>
<dbReference type="KEGG" id="hsa:261726"/>
<dbReference type="MANE-Select" id="ENST00000367833.7">
    <property type="protein sequence ID" value="ENSP00000356807.2"/>
    <property type="RefSeq nucleotide sequence ID" value="NM_152902.5"/>
    <property type="RefSeq protein sequence ID" value="NP_690866.1"/>
</dbReference>
<dbReference type="UCSC" id="uc001gff.5">
    <molecule id="O75663-1"/>
    <property type="organism name" value="human"/>
</dbReference>
<dbReference type="AGR" id="HGNC:30231"/>
<dbReference type="CTD" id="261726"/>
<dbReference type="DisGeNET" id="261726"/>
<dbReference type="GeneCards" id="TIPRL"/>
<dbReference type="HGNC" id="HGNC:30231">
    <property type="gene designation" value="TIPRL"/>
</dbReference>
<dbReference type="HPA" id="ENSG00000143155">
    <property type="expression patterns" value="Low tissue specificity"/>
</dbReference>
<dbReference type="MIM" id="611807">
    <property type="type" value="gene"/>
</dbReference>
<dbReference type="neXtProt" id="NX_O75663"/>
<dbReference type="OpenTargets" id="ENSG00000143155"/>
<dbReference type="PharmGKB" id="PA142670811"/>
<dbReference type="VEuPathDB" id="HostDB:ENSG00000143155"/>
<dbReference type="eggNOG" id="KOG3224">
    <property type="taxonomic scope" value="Eukaryota"/>
</dbReference>
<dbReference type="GeneTree" id="ENSGT00390000006659"/>
<dbReference type="HOGENOM" id="CLU_039187_2_0_1"/>
<dbReference type="InParanoid" id="O75663"/>
<dbReference type="OMA" id="DMILFED"/>
<dbReference type="OrthoDB" id="10253878at2759"/>
<dbReference type="PAN-GO" id="O75663">
    <property type="GO annotations" value="3 GO annotations based on evolutionary models"/>
</dbReference>
<dbReference type="PhylomeDB" id="O75663"/>
<dbReference type="TreeFam" id="TF105943"/>
<dbReference type="PathwayCommons" id="O75663"/>
<dbReference type="SignaLink" id="O75663"/>
<dbReference type="BioGRID-ORCS" id="261726">
    <property type="hits" value="284 hits in 1177 CRISPR screens"/>
</dbReference>
<dbReference type="ChiTaRS" id="TIPRL">
    <property type="organism name" value="human"/>
</dbReference>
<dbReference type="GenomeRNAi" id="261726"/>
<dbReference type="Pharos" id="O75663">
    <property type="development level" value="Tbio"/>
</dbReference>
<dbReference type="PRO" id="PR:O75663"/>
<dbReference type="Proteomes" id="UP000005640">
    <property type="component" value="Chromosome 1"/>
</dbReference>
<dbReference type="RNAct" id="O75663">
    <property type="molecule type" value="protein"/>
</dbReference>
<dbReference type="Bgee" id="ENSG00000143155">
    <property type="expression patterns" value="Expressed in cauda epididymis and 214 other cell types or tissues"/>
</dbReference>
<dbReference type="GO" id="GO:0005829">
    <property type="term" value="C:cytosol"/>
    <property type="evidence" value="ECO:0000318"/>
    <property type="project" value="GO_Central"/>
</dbReference>
<dbReference type="GO" id="GO:0072542">
    <property type="term" value="F:protein phosphatase activator activity"/>
    <property type="evidence" value="ECO:0000318"/>
    <property type="project" value="GO_Central"/>
</dbReference>
<dbReference type="GO" id="GO:0004864">
    <property type="term" value="F:protein phosphatase inhibitor activity"/>
    <property type="evidence" value="ECO:0000314"/>
    <property type="project" value="UniProtKB"/>
</dbReference>
<dbReference type="GO" id="GO:0000077">
    <property type="term" value="P:DNA damage checkpoint signaling"/>
    <property type="evidence" value="ECO:0000315"/>
    <property type="project" value="UniProtKB"/>
</dbReference>
<dbReference type="GO" id="GO:0031929">
    <property type="term" value="P:TOR signaling"/>
    <property type="evidence" value="ECO:0000318"/>
    <property type="project" value="GO_Central"/>
</dbReference>
<dbReference type="InterPro" id="IPR051330">
    <property type="entry name" value="Phosphatase_reg/MetRdx"/>
</dbReference>
<dbReference type="InterPro" id="IPR007303">
    <property type="entry name" value="TIP41-like"/>
</dbReference>
<dbReference type="PANTHER" id="PTHR21021">
    <property type="entry name" value="GAF/PUTATIVE CYTOSKELETAL PROTEIN"/>
    <property type="match status" value="1"/>
</dbReference>
<dbReference type="PANTHER" id="PTHR21021:SF16">
    <property type="entry name" value="TIP41-LIKE PROTEIN"/>
    <property type="match status" value="1"/>
</dbReference>
<dbReference type="Pfam" id="PF04176">
    <property type="entry name" value="TIP41"/>
    <property type="match status" value="1"/>
</dbReference>
<proteinExistence type="evidence at protein level"/>
<gene>
    <name type="primary">TIPRL</name>
</gene>
<name>TIPRL_HUMAN</name>
<comment type="function">
    <text evidence="2 4">May be a allosteric regulator of serine/threonine-protein phosphatase 2A (PP2A). Isoform 1 inhibits catalytic activity of the PP2A(D) core complex in vitro. The PP2A(C):TIPRL complex does not show phosphatase activity. Acts as a negative regulator of serine/threonine-protein phosphatase 4 probably by inhibiting the formation of the active PPP4C:PPP4R2 complex; the function is proposed to implicate it in DNA damage response by promoting H2AX phosphorylated on Ser-140 (gamma-H2AX). May play a role in the regulation of ATM/ATR signaling pathway controlling DNA replication and repair.</text>
</comment>
<comment type="subunit">
    <text evidence="1 2 3 4">Isoform 1 interacts with PPP2CA. Isoform 2 does not interact with PPP2CA. Interacts with PPP2CB, PPP4C and PPP6C. Interacts with IGBP1; the interaction is dependent on PPP2CA. Associates with a protein phosphatase 2A PP2A(C):IGBP1 complex. Interacts with PPP4C and PPP4R2.</text>
</comment>
<comment type="interaction">
    <interactant intactId="EBI-1054735">
        <id>O75663</id>
    </interactant>
    <interactant intactId="EBI-1055954">
        <id>P78318</id>
        <label>IGBP1</label>
    </interactant>
    <organismsDiffer>false</organismsDiffer>
    <experiments>2</experiments>
</comment>
<comment type="interaction">
    <interactant intactId="EBI-1054735">
        <id>O75663</id>
    </interactant>
    <interactant intactId="EBI-712311">
        <id>P67775</id>
        <label>PPP2CA</label>
    </interactant>
    <organismsDiffer>false</organismsDiffer>
    <experiments>3</experiments>
</comment>
<comment type="interaction">
    <interactant intactId="EBI-1054735">
        <id>O75663</id>
    </interactant>
    <interactant intactId="EBI-16765970">
        <id>P67775-1</id>
        <label>PPP2CA</label>
    </interactant>
    <organismsDiffer>false</organismsDiffer>
    <experiments>3</experiments>
</comment>
<comment type="interaction">
    <interactant intactId="EBI-1054735">
        <id>O75663</id>
    </interactant>
    <interactant intactId="EBI-16766021">
        <id>P67775-2</id>
        <label>PPP2CA</label>
    </interactant>
    <organismsDiffer>false</organismsDiffer>
    <experiments>3</experiments>
</comment>
<comment type="interaction">
    <interactant intactId="EBI-1054735">
        <id>O75663</id>
    </interactant>
    <interactant intactId="EBI-1044367">
        <id>P62714</id>
        <label>PPP2CB</label>
    </interactant>
    <organismsDiffer>false</organismsDiffer>
    <experiments>2</experiments>
</comment>
<comment type="interaction">
    <interactant intactId="EBI-1054735">
        <id>O75663</id>
    </interactant>
    <interactant intactId="EBI-1046072">
        <id>P60510</id>
        <label>PPP4C</label>
    </interactant>
    <organismsDiffer>false</organismsDiffer>
    <experiments>5</experiments>
</comment>
<comment type="interaction">
    <interactant intactId="EBI-1054735">
        <id>O75663</id>
    </interactant>
    <interactant intactId="EBI-359751">
        <id>O00743</id>
        <label>PPP6C</label>
    </interactant>
    <organismsDiffer>false</organismsDiffer>
    <experiments>4</experiments>
</comment>
<comment type="interaction">
    <interactant intactId="EBI-1054735">
        <id>O75663</id>
    </interactant>
    <interactant intactId="EBI-7050205">
        <id>P63331</id>
        <label>Ppp2ca</label>
    </interactant>
    <organismsDiffer>true</organismsDiffer>
    <experiments>3</experiments>
</comment>
<comment type="subcellular location">
    <subcellularLocation>
        <location evidence="3">Cytoplasm</location>
    </subcellularLocation>
</comment>
<comment type="alternative products">
    <event type="alternative splicing"/>
    <isoform>
        <id>O75663-1</id>
        <name>1</name>
        <sequence type="displayed"/>
    </isoform>
    <isoform>
        <id>O75663-2</id>
        <name>2</name>
        <name>TIP_i2</name>
        <sequence type="described" ref="VSP_027883 VSP_027884"/>
    </isoform>
</comment>
<comment type="similarity">
    <text evidence="6">Belongs to the TIP41 family.</text>
</comment>
<sequence length="272" mass="31444">MMIHGFQSSHRDFCFGPWKLTASKTHIMKSADVEKLADELHMPSLPEMMFGDNVLRIQHGSGFGIEFNATDALRCVNNYQGMLKVACAEEWQESRTEGEHSKEVIKPYDWTYTTDYKGTLLGESLKLKVVPTTDHIDTEKLKAREQIKFFEEVLLFEDELHDHGVSSLSVKIRVMPSSFFLLLRFFLRIDGVLIRMNDTRLYHEADKTYMLREYTSRESKISSLMHVPPSLFTEPNEISQYLPIKEAVCEKLIFPERIDPNPADSQKSTQVE</sequence>
<reference key="1">
    <citation type="submission" date="1999-04" db="EMBL/GenBank/DDBJ databases">
        <authorList>
            <person name="Rhodes S."/>
        </authorList>
    </citation>
    <scope>NUCLEOTIDE SEQUENCE [LARGE SCALE MRNA] (ISOFORM 1)</scope>
</reference>
<reference key="2">
    <citation type="journal article" date="2003" name="Oncogene">
        <title>Large-scale identification and characterization of human genes that activate NF-kappaB and MAPK signaling pathways.</title>
        <authorList>
            <person name="Matsuda A."/>
            <person name="Suzuki Y."/>
            <person name="Honda G."/>
            <person name="Muramatsu S."/>
            <person name="Matsuzaki O."/>
            <person name="Nagano Y."/>
            <person name="Doi T."/>
            <person name="Shimotohno K."/>
            <person name="Harada T."/>
            <person name="Nishida E."/>
            <person name="Hayashi H."/>
            <person name="Sugano S."/>
        </authorList>
    </citation>
    <scope>NUCLEOTIDE SEQUENCE [LARGE SCALE MRNA] (ISOFORM 1)</scope>
    <source>
        <tissue>Lung fibroblast</tissue>
    </source>
</reference>
<reference key="3">
    <citation type="journal article" date="2004" name="Nat. Genet.">
        <title>Complete sequencing and characterization of 21,243 full-length human cDNAs.</title>
        <authorList>
            <person name="Ota T."/>
            <person name="Suzuki Y."/>
            <person name="Nishikawa T."/>
            <person name="Otsuki T."/>
            <person name="Sugiyama T."/>
            <person name="Irie R."/>
            <person name="Wakamatsu A."/>
            <person name="Hayashi K."/>
            <person name="Sato H."/>
            <person name="Nagai K."/>
            <person name="Kimura K."/>
            <person name="Makita H."/>
            <person name="Sekine M."/>
            <person name="Obayashi M."/>
            <person name="Nishi T."/>
            <person name="Shibahara T."/>
            <person name="Tanaka T."/>
            <person name="Ishii S."/>
            <person name="Yamamoto J."/>
            <person name="Saito K."/>
            <person name="Kawai Y."/>
            <person name="Isono Y."/>
            <person name="Nakamura Y."/>
            <person name="Nagahari K."/>
            <person name="Murakami K."/>
            <person name="Yasuda T."/>
            <person name="Iwayanagi T."/>
            <person name="Wagatsuma M."/>
            <person name="Shiratori A."/>
            <person name="Sudo H."/>
            <person name="Hosoiri T."/>
            <person name="Kaku Y."/>
            <person name="Kodaira H."/>
            <person name="Kondo H."/>
            <person name="Sugawara M."/>
            <person name="Takahashi M."/>
            <person name="Kanda K."/>
            <person name="Yokoi T."/>
            <person name="Furuya T."/>
            <person name="Kikkawa E."/>
            <person name="Omura Y."/>
            <person name="Abe K."/>
            <person name="Kamihara K."/>
            <person name="Katsuta N."/>
            <person name="Sato K."/>
            <person name="Tanikawa M."/>
            <person name="Yamazaki M."/>
            <person name="Ninomiya K."/>
            <person name="Ishibashi T."/>
            <person name="Yamashita H."/>
            <person name="Murakawa K."/>
            <person name="Fujimori K."/>
            <person name="Tanai H."/>
            <person name="Kimata M."/>
            <person name="Watanabe M."/>
            <person name="Hiraoka S."/>
            <person name="Chiba Y."/>
            <person name="Ishida S."/>
            <person name="Ono Y."/>
            <person name="Takiguchi S."/>
            <person name="Watanabe S."/>
            <person name="Yosida M."/>
            <person name="Hotuta T."/>
            <person name="Kusano J."/>
            <person name="Kanehori K."/>
            <person name="Takahashi-Fujii A."/>
            <person name="Hara H."/>
            <person name="Tanase T.-O."/>
            <person name="Nomura Y."/>
            <person name="Togiya S."/>
            <person name="Komai F."/>
            <person name="Hara R."/>
            <person name="Takeuchi K."/>
            <person name="Arita M."/>
            <person name="Imose N."/>
            <person name="Musashino K."/>
            <person name="Yuuki H."/>
            <person name="Oshima A."/>
            <person name="Sasaki N."/>
            <person name="Aotsuka S."/>
            <person name="Yoshikawa Y."/>
            <person name="Matsunawa H."/>
            <person name="Ichihara T."/>
            <person name="Shiohata N."/>
            <person name="Sano S."/>
            <person name="Moriya S."/>
            <person name="Momiyama H."/>
            <person name="Satoh N."/>
            <person name="Takami S."/>
            <person name="Terashima Y."/>
            <person name="Suzuki O."/>
            <person name="Nakagawa S."/>
            <person name="Senoh A."/>
            <person name="Mizoguchi H."/>
            <person name="Goto Y."/>
            <person name="Shimizu F."/>
            <person name="Wakebe H."/>
            <person name="Hishigaki H."/>
            <person name="Watanabe T."/>
            <person name="Sugiyama A."/>
            <person name="Takemoto M."/>
            <person name="Kawakami B."/>
            <person name="Yamazaki M."/>
            <person name="Watanabe K."/>
            <person name="Kumagai A."/>
            <person name="Itakura S."/>
            <person name="Fukuzumi Y."/>
            <person name="Fujimori Y."/>
            <person name="Komiyama M."/>
            <person name="Tashiro H."/>
            <person name="Tanigami A."/>
            <person name="Fujiwara T."/>
            <person name="Ono T."/>
            <person name="Yamada K."/>
            <person name="Fujii Y."/>
            <person name="Ozaki K."/>
            <person name="Hirao M."/>
            <person name="Ohmori Y."/>
            <person name="Kawabata A."/>
            <person name="Hikiji T."/>
            <person name="Kobatake N."/>
            <person name="Inagaki H."/>
            <person name="Ikema Y."/>
            <person name="Okamoto S."/>
            <person name="Okitani R."/>
            <person name="Kawakami T."/>
            <person name="Noguchi S."/>
            <person name="Itoh T."/>
            <person name="Shigeta K."/>
            <person name="Senba T."/>
            <person name="Matsumura K."/>
            <person name="Nakajima Y."/>
            <person name="Mizuno T."/>
            <person name="Morinaga M."/>
            <person name="Sasaki M."/>
            <person name="Togashi T."/>
            <person name="Oyama M."/>
            <person name="Hata H."/>
            <person name="Watanabe M."/>
            <person name="Komatsu T."/>
            <person name="Mizushima-Sugano J."/>
            <person name="Satoh T."/>
            <person name="Shirai Y."/>
            <person name="Takahashi Y."/>
            <person name="Nakagawa K."/>
            <person name="Okumura K."/>
            <person name="Nagase T."/>
            <person name="Nomura N."/>
            <person name="Kikuchi H."/>
            <person name="Masuho Y."/>
            <person name="Yamashita R."/>
            <person name="Nakai K."/>
            <person name="Yada T."/>
            <person name="Nakamura Y."/>
            <person name="Ohara O."/>
            <person name="Isogai T."/>
            <person name="Sugano S."/>
        </authorList>
    </citation>
    <scope>NUCLEOTIDE SEQUENCE [LARGE SCALE MRNA] (ISOFORM 1)</scope>
</reference>
<reference key="4">
    <citation type="journal article" date="2006" name="Nature">
        <title>The DNA sequence and biological annotation of human chromosome 1.</title>
        <authorList>
            <person name="Gregory S.G."/>
            <person name="Barlow K.F."/>
            <person name="McLay K.E."/>
            <person name="Kaul R."/>
            <person name="Swarbreck D."/>
            <person name="Dunham A."/>
            <person name="Scott C.E."/>
            <person name="Howe K.L."/>
            <person name="Woodfine K."/>
            <person name="Spencer C.C.A."/>
            <person name="Jones M.C."/>
            <person name="Gillson C."/>
            <person name="Searle S."/>
            <person name="Zhou Y."/>
            <person name="Kokocinski F."/>
            <person name="McDonald L."/>
            <person name="Evans R."/>
            <person name="Phillips K."/>
            <person name="Atkinson A."/>
            <person name="Cooper R."/>
            <person name="Jones C."/>
            <person name="Hall R.E."/>
            <person name="Andrews T.D."/>
            <person name="Lloyd C."/>
            <person name="Ainscough R."/>
            <person name="Almeida J.P."/>
            <person name="Ambrose K.D."/>
            <person name="Anderson F."/>
            <person name="Andrew R.W."/>
            <person name="Ashwell R.I.S."/>
            <person name="Aubin K."/>
            <person name="Babbage A.K."/>
            <person name="Bagguley C.L."/>
            <person name="Bailey J."/>
            <person name="Beasley H."/>
            <person name="Bethel G."/>
            <person name="Bird C.P."/>
            <person name="Bray-Allen S."/>
            <person name="Brown J.Y."/>
            <person name="Brown A.J."/>
            <person name="Buckley D."/>
            <person name="Burton J."/>
            <person name="Bye J."/>
            <person name="Carder C."/>
            <person name="Chapman J.C."/>
            <person name="Clark S.Y."/>
            <person name="Clarke G."/>
            <person name="Clee C."/>
            <person name="Cobley V."/>
            <person name="Collier R.E."/>
            <person name="Corby N."/>
            <person name="Coville G.J."/>
            <person name="Davies J."/>
            <person name="Deadman R."/>
            <person name="Dunn M."/>
            <person name="Earthrowl M."/>
            <person name="Ellington A.G."/>
            <person name="Errington H."/>
            <person name="Frankish A."/>
            <person name="Frankland J."/>
            <person name="French L."/>
            <person name="Garner P."/>
            <person name="Garnett J."/>
            <person name="Gay L."/>
            <person name="Ghori M.R.J."/>
            <person name="Gibson R."/>
            <person name="Gilby L.M."/>
            <person name="Gillett W."/>
            <person name="Glithero R.J."/>
            <person name="Grafham D.V."/>
            <person name="Griffiths C."/>
            <person name="Griffiths-Jones S."/>
            <person name="Grocock R."/>
            <person name="Hammond S."/>
            <person name="Harrison E.S.I."/>
            <person name="Hart E."/>
            <person name="Haugen E."/>
            <person name="Heath P.D."/>
            <person name="Holmes S."/>
            <person name="Holt K."/>
            <person name="Howden P.J."/>
            <person name="Hunt A.R."/>
            <person name="Hunt S.E."/>
            <person name="Hunter G."/>
            <person name="Isherwood J."/>
            <person name="James R."/>
            <person name="Johnson C."/>
            <person name="Johnson D."/>
            <person name="Joy A."/>
            <person name="Kay M."/>
            <person name="Kershaw J.K."/>
            <person name="Kibukawa M."/>
            <person name="Kimberley A.M."/>
            <person name="King A."/>
            <person name="Knights A.J."/>
            <person name="Lad H."/>
            <person name="Laird G."/>
            <person name="Lawlor S."/>
            <person name="Leongamornlert D.A."/>
            <person name="Lloyd D.M."/>
            <person name="Loveland J."/>
            <person name="Lovell J."/>
            <person name="Lush M.J."/>
            <person name="Lyne R."/>
            <person name="Martin S."/>
            <person name="Mashreghi-Mohammadi M."/>
            <person name="Matthews L."/>
            <person name="Matthews N.S.W."/>
            <person name="McLaren S."/>
            <person name="Milne S."/>
            <person name="Mistry S."/>
            <person name="Moore M.J.F."/>
            <person name="Nickerson T."/>
            <person name="O'Dell C.N."/>
            <person name="Oliver K."/>
            <person name="Palmeiri A."/>
            <person name="Palmer S.A."/>
            <person name="Parker A."/>
            <person name="Patel D."/>
            <person name="Pearce A.V."/>
            <person name="Peck A.I."/>
            <person name="Pelan S."/>
            <person name="Phelps K."/>
            <person name="Phillimore B.J."/>
            <person name="Plumb R."/>
            <person name="Rajan J."/>
            <person name="Raymond C."/>
            <person name="Rouse G."/>
            <person name="Saenphimmachak C."/>
            <person name="Sehra H.K."/>
            <person name="Sheridan E."/>
            <person name="Shownkeen R."/>
            <person name="Sims S."/>
            <person name="Skuce C.D."/>
            <person name="Smith M."/>
            <person name="Steward C."/>
            <person name="Subramanian S."/>
            <person name="Sycamore N."/>
            <person name="Tracey A."/>
            <person name="Tromans A."/>
            <person name="Van Helmond Z."/>
            <person name="Wall M."/>
            <person name="Wallis J.M."/>
            <person name="White S."/>
            <person name="Whitehead S.L."/>
            <person name="Wilkinson J.E."/>
            <person name="Willey D.L."/>
            <person name="Williams H."/>
            <person name="Wilming L."/>
            <person name="Wray P.W."/>
            <person name="Wu Z."/>
            <person name="Coulson A."/>
            <person name="Vaudin M."/>
            <person name="Sulston J.E."/>
            <person name="Durbin R.M."/>
            <person name="Hubbard T."/>
            <person name="Wooster R."/>
            <person name="Dunham I."/>
            <person name="Carter N.P."/>
            <person name="McVean G."/>
            <person name="Ross M.T."/>
            <person name="Harrow J."/>
            <person name="Olson M.V."/>
            <person name="Beck S."/>
            <person name="Rogers J."/>
            <person name="Bentley D.R."/>
        </authorList>
    </citation>
    <scope>NUCLEOTIDE SEQUENCE [LARGE SCALE GENOMIC DNA]</scope>
</reference>
<reference key="5">
    <citation type="submission" date="2005-07" db="EMBL/GenBank/DDBJ databases">
        <authorList>
            <person name="Mural R.J."/>
            <person name="Istrail S."/>
            <person name="Sutton G.G."/>
            <person name="Florea L."/>
            <person name="Halpern A.L."/>
            <person name="Mobarry C.M."/>
            <person name="Lippert R."/>
            <person name="Walenz B."/>
            <person name="Shatkay H."/>
            <person name="Dew I."/>
            <person name="Miller J.R."/>
            <person name="Flanigan M.J."/>
            <person name="Edwards N.J."/>
            <person name="Bolanos R."/>
            <person name="Fasulo D."/>
            <person name="Halldorsson B.V."/>
            <person name="Hannenhalli S."/>
            <person name="Turner R."/>
            <person name="Yooseph S."/>
            <person name="Lu F."/>
            <person name="Nusskern D.R."/>
            <person name="Shue B.C."/>
            <person name="Zheng X.H."/>
            <person name="Zhong F."/>
            <person name="Delcher A.L."/>
            <person name="Huson D.H."/>
            <person name="Kravitz S.A."/>
            <person name="Mouchard L."/>
            <person name="Reinert K."/>
            <person name="Remington K.A."/>
            <person name="Clark A.G."/>
            <person name="Waterman M.S."/>
            <person name="Eichler E.E."/>
            <person name="Adams M.D."/>
            <person name="Hunkapiller M.W."/>
            <person name="Myers E.W."/>
            <person name="Venter J.C."/>
        </authorList>
    </citation>
    <scope>NUCLEOTIDE SEQUENCE [LARGE SCALE GENOMIC DNA]</scope>
</reference>
<reference key="6">
    <citation type="journal article" date="2004" name="Genome Res.">
        <title>The status, quality, and expansion of the NIH full-length cDNA project: the Mammalian Gene Collection (MGC).</title>
        <authorList>
            <consortium name="The MGC Project Team"/>
        </authorList>
    </citation>
    <scope>NUCLEOTIDE SEQUENCE [LARGE SCALE MRNA] (ISOFORM 2)</scope>
    <source>
        <tissue>Muscle</tissue>
    </source>
</reference>
<reference key="7">
    <citation type="journal article" date="2007" name="BMC Genomics">
        <title>The full-ORF clone resource of the German cDNA consortium.</title>
        <authorList>
            <person name="Bechtel S."/>
            <person name="Rosenfelder H."/>
            <person name="Duda A."/>
            <person name="Schmidt C.P."/>
            <person name="Ernst U."/>
            <person name="Wellenreuther R."/>
            <person name="Mehrle A."/>
            <person name="Schuster C."/>
            <person name="Bahr A."/>
            <person name="Bloecker H."/>
            <person name="Heubner D."/>
            <person name="Hoerlein A."/>
            <person name="Michel G."/>
            <person name="Wedler H."/>
            <person name="Koehrer K."/>
            <person name="Ottenwaelder B."/>
            <person name="Poustka A."/>
            <person name="Wiemann S."/>
            <person name="Schupp I."/>
        </authorList>
    </citation>
    <scope>NUCLEOTIDE SEQUENCE [LARGE SCALE MRNA] OF 205-272 (ISOFORM 1)</scope>
    <source>
        <tissue>Fetal kidney</tissue>
    </source>
</reference>
<reference key="8">
    <citation type="journal article" date="2005" name="Mol. Cell. Proteomics">
        <title>A novel, evolutionarily conserved protein phosphatase complex involved in cisplatin sensitivity.</title>
        <authorList>
            <person name="Gingras A.-C."/>
            <person name="Caballero M."/>
            <person name="Zarske M."/>
            <person name="Sanchez A."/>
            <person name="Hazbun T.R."/>
            <person name="Fields S."/>
            <person name="Sonenberg N."/>
            <person name="Hafen E."/>
            <person name="Raught B."/>
            <person name="Aebersold R."/>
        </authorList>
    </citation>
    <scope>INTERACTION WITH PPP2CB; PPP4C AND PPP6C</scope>
</reference>
<reference key="9">
    <citation type="journal article" date="2007" name="FEBS J.">
        <title>Interaction analysis of the heterotrimer formed by the phosphatase 2A catalytic subunit, alpha4 and the mammalian ortholog of yeast Tip41 (TIPRL).</title>
        <authorList>
            <person name="Smetana J.H."/>
            <person name="Zanchin N.I."/>
        </authorList>
    </citation>
    <scope>INTERACTION WITH PPP2CA; PPP2CB; PPP4C; PPP6C AND IGBP1</scope>
    <scope>SUBUNIT</scope>
    <scope>SUBCELLULAR LOCATION</scope>
    <scope>MUTAGENESIS OF ASP-71; TYR-79; ILE-136; MET-196 AND ASP-198</scope>
</reference>
<reference key="10">
    <citation type="journal article" date="2007" name="Oncogene">
        <title>Identification of a PP2A-interacting protein that functions as a negative regulator of phosphatase activity in the ATM/ATR signaling pathway.</title>
        <authorList>
            <person name="McConnell J.L."/>
            <person name="Gomez R.J."/>
            <person name="McCorvey L.R."/>
            <person name="Law B.K."/>
            <person name="Wadzinski B.E."/>
        </authorList>
    </citation>
    <scope>FUNCTION</scope>
    <scope>ALTERNATIVE SPLICING (ISOFORM 2)</scope>
    <scope>INTERACTION WITH PPP2CA; PPP4C AND PPP6C</scope>
</reference>
<reference key="11">
    <citation type="journal article" date="2009" name="Science">
        <title>Lysine acetylation targets protein complexes and co-regulates major cellular functions.</title>
        <authorList>
            <person name="Choudhary C."/>
            <person name="Kumar C."/>
            <person name="Gnad F."/>
            <person name="Nielsen M.L."/>
            <person name="Rehman M."/>
            <person name="Walther T.C."/>
            <person name="Olsen J.V."/>
            <person name="Mann M."/>
        </authorList>
    </citation>
    <scope>ACETYLATION [LARGE SCALE ANALYSIS] AT LYS-106</scope>
    <scope>IDENTIFICATION BY MASS SPECTROMETRY [LARGE SCALE ANALYSIS]</scope>
</reference>
<reference key="12">
    <citation type="journal article" date="2011" name="BMC Syst. Biol.">
        <title>Initial characterization of the human central proteome.</title>
        <authorList>
            <person name="Burkard T.R."/>
            <person name="Planyavsky M."/>
            <person name="Kaupe I."/>
            <person name="Breitwieser F.P."/>
            <person name="Buerckstuemmer T."/>
            <person name="Bennett K.L."/>
            <person name="Superti-Furga G."/>
            <person name="Colinge J."/>
        </authorList>
    </citation>
    <scope>IDENTIFICATION BY MASS SPECTROMETRY [LARGE SCALE ANALYSIS]</scope>
</reference>
<reference key="13">
    <citation type="journal article" date="2013" name="J. Proteome Res.">
        <title>Toward a comprehensive characterization of a human cancer cell phosphoproteome.</title>
        <authorList>
            <person name="Zhou H."/>
            <person name="Di Palma S."/>
            <person name="Preisinger C."/>
            <person name="Peng M."/>
            <person name="Polat A.N."/>
            <person name="Heck A.J."/>
            <person name="Mohammed S."/>
        </authorList>
    </citation>
    <scope>PHOSPHORYLATION [LARGE SCALE ANALYSIS] AT SER-265</scope>
    <scope>IDENTIFICATION BY MASS SPECTROMETRY [LARGE SCALE ANALYSIS]</scope>
    <source>
        <tissue>Erythroleukemia</tissue>
    </source>
</reference>
<reference key="14">
    <citation type="journal article" date="2015" name="PLoS ONE">
        <title>TIPRL inhibits protein phosphatase 4 activity and promotes H2AX phosphorylation in the DNA damage response.</title>
        <authorList>
            <person name="Rosales K.R."/>
            <person name="Reid M.A."/>
            <person name="Yang Y."/>
            <person name="Tran T.Q."/>
            <person name="Wang W.I."/>
            <person name="Lowman X."/>
            <person name="Pan M."/>
            <person name="Kong M."/>
        </authorList>
    </citation>
    <scope>INTERACTION WITH PPP4C AND PPP4R2</scope>
    <scope>FUNCTION</scope>
</reference>
<reference key="15">
    <citation type="journal article" date="2016" name="Sci. Rep.">
        <title>Crystal structure of the human Tip41 orthologue, TIPRL, reveals a novel fold and a binding site for the PP2Ac C-terminus.</title>
        <authorList>
            <person name="Scorsato V."/>
            <person name="Lima T.B."/>
            <person name="Righetto G.L."/>
            <person name="Zanchin N.I."/>
            <person name="Brandao-Neto J."/>
            <person name="Sandy J."/>
            <person name="Pereira H.D."/>
            <person name="Ferrari A.J."/>
            <person name="Gozzo F.C."/>
            <person name="Smetana J.H."/>
            <person name="Aparicio R."/>
        </authorList>
    </citation>
    <scope>X-RAY CRYSTALLOGRAPHY (2.15 ANGSTROMS) OF 16-256</scope>
</reference>
<organism>
    <name type="scientific">Homo sapiens</name>
    <name type="common">Human</name>
    <dbReference type="NCBI Taxonomy" id="9606"/>
    <lineage>
        <taxon>Eukaryota</taxon>
        <taxon>Metazoa</taxon>
        <taxon>Chordata</taxon>
        <taxon>Craniata</taxon>
        <taxon>Vertebrata</taxon>
        <taxon>Euteleostomi</taxon>
        <taxon>Mammalia</taxon>
        <taxon>Eutheria</taxon>
        <taxon>Euarchontoglires</taxon>
        <taxon>Primates</taxon>
        <taxon>Haplorrhini</taxon>
        <taxon>Catarrhini</taxon>
        <taxon>Hominidae</taxon>
        <taxon>Homo</taxon>
    </lineage>
</organism>
<keyword id="KW-0002">3D-structure</keyword>
<keyword id="KW-0007">Acetylation</keyword>
<keyword id="KW-0025">Alternative splicing</keyword>
<keyword id="KW-0963">Cytoplasm</keyword>
<keyword id="KW-0597">Phosphoprotein</keyword>
<keyword id="KW-1267">Proteomics identification</keyword>
<keyword id="KW-1185">Reference proteome</keyword>